<reference key="1">
    <citation type="journal article" date="2007" name="PLoS ONE">
        <title>Analysis of the neurotoxin complex genes in Clostridium botulinum A1-A4 and B1 strains: BoNT/A3, /Ba4 and /B1 clusters are located within plasmids.</title>
        <authorList>
            <person name="Smith T.J."/>
            <person name="Hill K.K."/>
            <person name="Foley B.T."/>
            <person name="Detter J.C."/>
            <person name="Munk A.C."/>
            <person name="Bruce D.C."/>
            <person name="Doggett N.A."/>
            <person name="Smith L.A."/>
            <person name="Marks J.D."/>
            <person name="Xie G."/>
            <person name="Brettin T.S."/>
        </authorList>
    </citation>
    <scope>NUCLEOTIDE SEQUENCE [LARGE SCALE GENOMIC DNA]</scope>
    <source>
        <strain>Loch Maree / Type A3</strain>
    </source>
</reference>
<sequence>MNEILNTKDINAIGEFFIETWGCQMNEEDSEKLSGMLKKEGYIRTEERENADVIIFNTCCVRENAELKVYGNLGILKGLKSKNPNLIIAVTGCMMQQKGMAETIKKKFPFVDIIIGTHNLHNFPNYLNEVKKKDTSILKIQEKEDSIIENMPIDRKNSMKAFVTIMYGCNNFCTYCIVPYVRGRERSRTPENIEDEIKKLISEGYKEITLLGQNVNSYGKDLEPKVTFADLLERVNTIDGLERVRFMTSHPKDLTDDVIEAIAKCDKLCEQIHLPVQSGSSEILKKMNRHYDREKYLDVVSKIKKLIPNVALSTDIIVGFPGETEKDFEETLSLVKEVEYDSAFTFLYSIRKGTPAAKFEDQVPEDVKHKRFNRLVEVVNEISAKKNKAYEGKIEEVLVEGTSKNDENKLMGRTRTGKLVNFIGDKDSIGKLVNVKIIKANSFSLTGEEI</sequence>
<keyword id="KW-0004">4Fe-4S</keyword>
<keyword id="KW-0963">Cytoplasm</keyword>
<keyword id="KW-0408">Iron</keyword>
<keyword id="KW-0411">Iron-sulfur</keyword>
<keyword id="KW-0479">Metal-binding</keyword>
<keyword id="KW-0949">S-adenosyl-L-methionine</keyword>
<keyword id="KW-0808">Transferase</keyword>
<keyword id="KW-0819">tRNA processing</keyword>
<evidence type="ECO:0000255" key="1">
    <source>
        <dbReference type="HAMAP-Rule" id="MF_01864"/>
    </source>
</evidence>
<evidence type="ECO:0000255" key="2">
    <source>
        <dbReference type="PROSITE-ProRule" id="PRU01266"/>
    </source>
</evidence>
<comment type="function">
    <text evidence="1">Catalyzes the methylthiolation of N6-(dimethylallyl)adenosine (i(6)A), leading to the formation of 2-methylthio-N6-(dimethylallyl)adenosine (ms(2)i(6)A) at position 37 in tRNAs that read codons beginning with uridine.</text>
</comment>
<comment type="catalytic activity">
    <reaction evidence="1">
        <text>N(6)-dimethylallyladenosine(37) in tRNA + (sulfur carrier)-SH + AH2 + 2 S-adenosyl-L-methionine = 2-methylsulfanyl-N(6)-dimethylallyladenosine(37) in tRNA + (sulfur carrier)-H + 5'-deoxyadenosine + L-methionine + A + S-adenosyl-L-homocysteine + 2 H(+)</text>
        <dbReference type="Rhea" id="RHEA:37067"/>
        <dbReference type="Rhea" id="RHEA-COMP:10375"/>
        <dbReference type="Rhea" id="RHEA-COMP:10376"/>
        <dbReference type="Rhea" id="RHEA-COMP:14737"/>
        <dbReference type="Rhea" id="RHEA-COMP:14739"/>
        <dbReference type="ChEBI" id="CHEBI:13193"/>
        <dbReference type="ChEBI" id="CHEBI:15378"/>
        <dbReference type="ChEBI" id="CHEBI:17319"/>
        <dbReference type="ChEBI" id="CHEBI:17499"/>
        <dbReference type="ChEBI" id="CHEBI:29917"/>
        <dbReference type="ChEBI" id="CHEBI:57844"/>
        <dbReference type="ChEBI" id="CHEBI:57856"/>
        <dbReference type="ChEBI" id="CHEBI:59789"/>
        <dbReference type="ChEBI" id="CHEBI:64428"/>
        <dbReference type="ChEBI" id="CHEBI:74415"/>
        <dbReference type="ChEBI" id="CHEBI:74417"/>
        <dbReference type="EC" id="2.8.4.3"/>
    </reaction>
</comment>
<comment type="cofactor">
    <cofactor evidence="1">
        <name>[4Fe-4S] cluster</name>
        <dbReference type="ChEBI" id="CHEBI:49883"/>
    </cofactor>
    <text evidence="1">Binds 2 [4Fe-4S] clusters. One cluster is coordinated with 3 cysteines and an exchangeable S-adenosyl-L-methionine.</text>
</comment>
<comment type="subunit">
    <text evidence="1">Monomer.</text>
</comment>
<comment type="subcellular location">
    <subcellularLocation>
        <location evidence="1">Cytoplasm</location>
    </subcellularLocation>
</comment>
<comment type="similarity">
    <text evidence="1">Belongs to the methylthiotransferase family. MiaB subfamily.</text>
</comment>
<organism>
    <name type="scientific">Clostridium botulinum (strain Loch Maree / Type A3)</name>
    <dbReference type="NCBI Taxonomy" id="498214"/>
    <lineage>
        <taxon>Bacteria</taxon>
        <taxon>Bacillati</taxon>
        <taxon>Bacillota</taxon>
        <taxon>Clostridia</taxon>
        <taxon>Eubacteriales</taxon>
        <taxon>Clostridiaceae</taxon>
        <taxon>Clostridium</taxon>
    </lineage>
</organism>
<gene>
    <name evidence="1" type="primary">miaB</name>
    <name type="ordered locus">CLK_1182</name>
</gene>
<accession>B1KSA4</accession>
<feature type="chain" id="PRO_0000374226" description="tRNA-2-methylthio-N(6)-dimethylallyladenosine synthase">
    <location>
        <begin position="1"/>
        <end position="450"/>
    </location>
</feature>
<feature type="domain" description="MTTase N-terminal" evidence="1">
    <location>
        <begin position="14"/>
        <end position="132"/>
    </location>
</feature>
<feature type="domain" description="Radical SAM core" evidence="2">
    <location>
        <begin position="155"/>
        <end position="385"/>
    </location>
</feature>
<feature type="domain" description="TRAM" evidence="1">
    <location>
        <begin position="388"/>
        <end position="450"/>
    </location>
</feature>
<feature type="binding site" evidence="1">
    <location>
        <position position="23"/>
    </location>
    <ligand>
        <name>[4Fe-4S] cluster</name>
        <dbReference type="ChEBI" id="CHEBI:49883"/>
        <label>1</label>
    </ligand>
</feature>
<feature type="binding site" evidence="1">
    <location>
        <position position="59"/>
    </location>
    <ligand>
        <name>[4Fe-4S] cluster</name>
        <dbReference type="ChEBI" id="CHEBI:49883"/>
        <label>1</label>
    </ligand>
</feature>
<feature type="binding site" evidence="1">
    <location>
        <position position="93"/>
    </location>
    <ligand>
        <name>[4Fe-4S] cluster</name>
        <dbReference type="ChEBI" id="CHEBI:49883"/>
        <label>1</label>
    </ligand>
</feature>
<feature type="binding site" evidence="1">
    <location>
        <position position="169"/>
    </location>
    <ligand>
        <name>[4Fe-4S] cluster</name>
        <dbReference type="ChEBI" id="CHEBI:49883"/>
        <label>2</label>
        <note>4Fe-4S-S-AdoMet</note>
    </ligand>
</feature>
<feature type="binding site" evidence="1">
    <location>
        <position position="173"/>
    </location>
    <ligand>
        <name>[4Fe-4S] cluster</name>
        <dbReference type="ChEBI" id="CHEBI:49883"/>
        <label>2</label>
        <note>4Fe-4S-S-AdoMet</note>
    </ligand>
</feature>
<feature type="binding site" evidence="1">
    <location>
        <position position="176"/>
    </location>
    <ligand>
        <name>[4Fe-4S] cluster</name>
        <dbReference type="ChEBI" id="CHEBI:49883"/>
        <label>2</label>
        <note>4Fe-4S-S-AdoMet</note>
    </ligand>
</feature>
<name>MIAB_CLOBM</name>
<protein>
    <recommendedName>
        <fullName evidence="1">tRNA-2-methylthio-N(6)-dimethylallyladenosine synthase</fullName>
        <ecNumber evidence="1">2.8.4.3</ecNumber>
    </recommendedName>
    <alternativeName>
        <fullName evidence="1">(Dimethylallyl)adenosine tRNA methylthiotransferase MiaB</fullName>
    </alternativeName>
    <alternativeName>
        <fullName evidence="1">tRNA-i(6)A37 methylthiotransferase</fullName>
    </alternativeName>
</protein>
<proteinExistence type="inferred from homology"/>
<dbReference type="EC" id="2.8.4.3" evidence="1"/>
<dbReference type="EMBL" id="CP000962">
    <property type="protein sequence ID" value="ACA54950.1"/>
    <property type="molecule type" value="Genomic_DNA"/>
</dbReference>
<dbReference type="RefSeq" id="WP_012342988.1">
    <property type="nucleotide sequence ID" value="NC_010520.1"/>
</dbReference>
<dbReference type="SMR" id="B1KSA4"/>
<dbReference type="KEGG" id="cbl:CLK_1182"/>
<dbReference type="HOGENOM" id="CLU_018697_2_0_9"/>
<dbReference type="GO" id="GO:0005829">
    <property type="term" value="C:cytosol"/>
    <property type="evidence" value="ECO:0007669"/>
    <property type="project" value="TreeGrafter"/>
</dbReference>
<dbReference type="GO" id="GO:0051539">
    <property type="term" value="F:4 iron, 4 sulfur cluster binding"/>
    <property type="evidence" value="ECO:0007669"/>
    <property type="project" value="UniProtKB-UniRule"/>
</dbReference>
<dbReference type="GO" id="GO:0046872">
    <property type="term" value="F:metal ion binding"/>
    <property type="evidence" value="ECO:0007669"/>
    <property type="project" value="UniProtKB-KW"/>
</dbReference>
<dbReference type="GO" id="GO:0035597">
    <property type="term" value="F:N6-isopentenyladenosine methylthiotransferase activity"/>
    <property type="evidence" value="ECO:0007669"/>
    <property type="project" value="TreeGrafter"/>
</dbReference>
<dbReference type="CDD" id="cd01335">
    <property type="entry name" value="Radical_SAM"/>
    <property type="match status" value="1"/>
</dbReference>
<dbReference type="FunFam" id="3.40.50.12160:FF:000006">
    <property type="entry name" value="tRNA-2-methylthio-N(6)-dimethylallyladenosine synthase"/>
    <property type="match status" value="1"/>
</dbReference>
<dbReference type="FunFam" id="3.80.30.20:FF:000001">
    <property type="entry name" value="tRNA-2-methylthio-N(6)-dimethylallyladenosine synthase 2"/>
    <property type="match status" value="1"/>
</dbReference>
<dbReference type="Gene3D" id="3.40.50.12160">
    <property type="entry name" value="Methylthiotransferase, N-terminal domain"/>
    <property type="match status" value="1"/>
</dbReference>
<dbReference type="Gene3D" id="3.80.30.20">
    <property type="entry name" value="tm_1862 like domain"/>
    <property type="match status" value="1"/>
</dbReference>
<dbReference type="HAMAP" id="MF_01864">
    <property type="entry name" value="tRNA_metthiotr_MiaB"/>
    <property type="match status" value="1"/>
</dbReference>
<dbReference type="InterPro" id="IPR006638">
    <property type="entry name" value="Elp3/MiaA/NifB-like_rSAM"/>
</dbReference>
<dbReference type="InterPro" id="IPR005839">
    <property type="entry name" value="Methylthiotransferase"/>
</dbReference>
<dbReference type="InterPro" id="IPR020612">
    <property type="entry name" value="Methylthiotransferase_CS"/>
</dbReference>
<dbReference type="InterPro" id="IPR013848">
    <property type="entry name" value="Methylthiotransferase_N"/>
</dbReference>
<dbReference type="InterPro" id="IPR038135">
    <property type="entry name" value="Methylthiotransferase_N_sf"/>
</dbReference>
<dbReference type="InterPro" id="IPR006463">
    <property type="entry name" value="MiaB_methiolase"/>
</dbReference>
<dbReference type="InterPro" id="IPR007197">
    <property type="entry name" value="rSAM"/>
</dbReference>
<dbReference type="InterPro" id="IPR023404">
    <property type="entry name" value="rSAM_horseshoe"/>
</dbReference>
<dbReference type="InterPro" id="IPR002792">
    <property type="entry name" value="TRAM_dom"/>
</dbReference>
<dbReference type="NCBIfam" id="TIGR01574">
    <property type="entry name" value="miaB-methiolase"/>
    <property type="match status" value="1"/>
</dbReference>
<dbReference type="NCBIfam" id="TIGR00089">
    <property type="entry name" value="MiaB/RimO family radical SAM methylthiotransferase"/>
    <property type="match status" value="1"/>
</dbReference>
<dbReference type="PANTHER" id="PTHR43020">
    <property type="entry name" value="CDK5 REGULATORY SUBUNIT-ASSOCIATED PROTEIN 1"/>
    <property type="match status" value="1"/>
</dbReference>
<dbReference type="PANTHER" id="PTHR43020:SF2">
    <property type="entry name" value="MITOCHONDRIAL TRNA METHYLTHIOTRANSFERASE CDK5RAP1"/>
    <property type="match status" value="1"/>
</dbReference>
<dbReference type="Pfam" id="PF04055">
    <property type="entry name" value="Radical_SAM"/>
    <property type="match status" value="1"/>
</dbReference>
<dbReference type="Pfam" id="PF01938">
    <property type="entry name" value="TRAM"/>
    <property type="match status" value="1"/>
</dbReference>
<dbReference type="Pfam" id="PF00919">
    <property type="entry name" value="UPF0004"/>
    <property type="match status" value="1"/>
</dbReference>
<dbReference type="SFLD" id="SFLDF00273">
    <property type="entry name" value="(dimethylallyl)adenosine_tRNA"/>
    <property type="match status" value="1"/>
</dbReference>
<dbReference type="SFLD" id="SFLDG01082">
    <property type="entry name" value="B12-binding_domain_containing"/>
    <property type="match status" value="1"/>
</dbReference>
<dbReference type="SFLD" id="SFLDG01061">
    <property type="entry name" value="methylthiotransferase"/>
    <property type="match status" value="1"/>
</dbReference>
<dbReference type="SMART" id="SM00729">
    <property type="entry name" value="Elp3"/>
    <property type="match status" value="1"/>
</dbReference>
<dbReference type="SUPFAM" id="SSF102114">
    <property type="entry name" value="Radical SAM enzymes"/>
    <property type="match status" value="1"/>
</dbReference>
<dbReference type="PROSITE" id="PS51449">
    <property type="entry name" value="MTTASE_N"/>
    <property type="match status" value="1"/>
</dbReference>
<dbReference type="PROSITE" id="PS01278">
    <property type="entry name" value="MTTASE_RADICAL"/>
    <property type="match status" value="1"/>
</dbReference>
<dbReference type="PROSITE" id="PS51918">
    <property type="entry name" value="RADICAL_SAM"/>
    <property type="match status" value="1"/>
</dbReference>
<dbReference type="PROSITE" id="PS50926">
    <property type="entry name" value="TRAM"/>
    <property type="match status" value="1"/>
</dbReference>